<reference key="1">
    <citation type="journal article" date="1999" name="Nature">
        <title>Sequence and analysis of chromosome 2 of the plant Arabidopsis thaliana.</title>
        <authorList>
            <person name="Lin X."/>
            <person name="Kaul S."/>
            <person name="Rounsley S.D."/>
            <person name="Shea T.P."/>
            <person name="Benito M.-I."/>
            <person name="Town C.D."/>
            <person name="Fujii C.Y."/>
            <person name="Mason T.M."/>
            <person name="Bowman C.L."/>
            <person name="Barnstead M.E."/>
            <person name="Feldblyum T.V."/>
            <person name="Buell C.R."/>
            <person name="Ketchum K.A."/>
            <person name="Lee J.J."/>
            <person name="Ronning C.M."/>
            <person name="Koo H.L."/>
            <person name="Moffat K.S."/>
            <person name="Cronin L.A."/>
            <person name="Shen M."/>
            <person name="Pai G."/>
            <person name="Van Aken S."/>
            <person name="Umayam L."/>
            <person name="Tallon L.J."/>
            <person name="Gill J.E."/>
            <person name="Adams M.D."/>
            <person name="Carrera A.J."/>
            <person name="Creasy T.H."/>
            <person name="Goodman H.M."/>
            <person name="Somerville C.R."/>
            <person name="Copenhaver G.P."/>
            <person name="Preuss D."/>
            <person name="Nierman W.C."/>
            <person name="White O."/>
            <person name="Eisen J.A."/>
            <person name="Salzberg S.L."/>
            <person name="Fraser C.M."/>
            <person name="Venter J.C."/>
        </authorList>
    </citation>
    <scope>NUCLEOTIDE SEQUENCE [LARGE SCALE GENOMIC DNA]</scope>
    <source>
        <strain>cv. Columbia</strain>
    </source>
</reference>
<reference key="2">
    <citation type="journal article" date="2017" name="Plant J.">
        <title>Araport11: a complete reannotation of the Arabidopsis thaliana reference genome.</title>
        <authorList>
            <person name="Cheng C.Y."/>
            <person name="Krishnakumar V."/>
            <person name="Chan A.P."/>
            <person name="Thibaud-Nissen F."/>
            <person name="Schobel S."/>
            <person name="Town C.D."/>
        </authorList>
    </citation>
    <scope>GENOME REANNOTATION</scope>
    <source>
        <strain>cv. Columbia</strain>
    </source>
</reference>
<reference key="3">
    <citation type="submission" date="2005-05" db="EMBL/GenBank/DDBJ databases">
        <authorList>
            <person name="Underwood B.A."/>
            <person name="Xiao Y.-L."/>
            <person name="Moskal W.A. Jr."/>
            <person name="Monaghan E.L."/>
            <person name="Wang W."/>
            <person name="Redman J.C."/>
            <person name="Wu H.C."/>
            <person name="Utterback T."/>
            <person name="Town C.D."/>
        </authorList>
    </citation>
    <scope>NUCLEOTIDE SEQUENCE [LARGE SCALE MRNA]</scope>
    <source>
        <strain>cv. Columbia</strain>
    </source>
</reference>
<reference key="4">
    <citation type="submission" date="2009-03" db="EMBL/GenBank/DDBJ databases">
        <title>ORF cloning and analysis of Arabidopsis transcription factor genes.</title>
        <authorList>
            <person name="Fujita M."/>
            <person name="Mizukado S."/>
            <person name="Seki M."/>
            <person name="Shinozaki K."/>
            <person name="Mitsuda N."/>
            <person name="Takiguchi Y."/>
            <person name="Takagi M."/>
        </authorList>
    </citation>
    <scope>NUCLEOTIDE SEQUENCE [LARGE SCALE MRNA]</scope>
</reference>
<reference key="5">
    <citation type="journal article" date="2004" name="Curr. Biol.">
        <title>Competence to respond to floral inductive signals requires the homeobox genes PENNYWISE and POUND-FOOLISH.</title>
        <authorList>
            <person name="Smith H.M.S."/>
            <person name="Campbell B.C.C."/>
            <person name="Hake S."/>
        </authorList>
    </citation>
    <scope>GENE FAMILY ORGANIZATION</scope>
</reference>
<reference key="6">
    <citation type="journal article" date="2005" name="Proc. Natl. Acad. Sci. U.S.A.">
        <title>A central role of Arabidopsis thaliana ovate family proteins in networking and subcellular localization of 3-aa loop extension homeodomain proteins.</title>
        <authorList>
            <person name="Hackbusch J."/>
            <person name="Richter K."/>
            <person name="Muller J."/>
            <person name="Salamini F."/>
            <person name="Uhrig J.F."/>
        </authorList>
    </citation>
    <scope>INTERACTION WITH OFP1</scope>
</reference>
<feature type="chain" id="PRO_0000315461" description="BEL1-like homeodomain protein 5">
    <location>
        <begin position="1"/>
        <end position="431"/>
    </location>
</feature>
<feature type="DNA-binding region" description="Homeobox" evidence="2">
    <location>
        <begin position="228"/>
        <end position="290"/>
    </location>
</feature>
<feature type="region of interest" description="SR/KY domain">
    <location>
        <begin position="80"/>
        <end position="96"/>
    </location>
</feature>
<feature type="region of interest" description="BELL domain">
    <location>
        <begin position="128"/>
        <end position="199"/>
    </location>
</feature>
<feature type="region of interest" description="Disordered" evidence="3">
    <location>
        <begin position="302"/>
        <end position="333"/>
    </location>
</feature>
<feature type="compositionally biased region" description="Basic and acidic residues" evidence="3">
    <location>
        <begin position="302"/>
        <end position="312"/>
    </location>
</feature>
<feature type="compositionally biased region" description="Polar residues" evidence="3">
    <location>
        <begin position="313"/>
        <end position="322"/>
    </location>
</feature>
<feature type="compositionally biased region" description="Low complexity" evidence="3">
    <location>
        <begin position="323"/>
        <end position="333"/>
    </location>
</feature>
<feature type="sequence conflict" description="In Ref. 1; AAM15481." evidence="5" ref="1">
    <original>A</original>
    <variation>V</variation>
    <location>
        <position position="239"/>
    </location>
</feature>
<gene>
    <name type="primary">BLH5</name>
    <name type="ordered locus">At2g27220</name>
    <name type="ORF">T22O13.1</name>
</gene>
<evidence type="ECO:0000250" key="1"/>
<evidence type="ECO:0000255" key="2">
    <source>
        <dbReference type="PROSITE-ProRule" id="PRU00108"/>
    </source>
</evidence>
<evidence type="ECO:0000256" key="3">
    <source>
        <dbReference type="SAM" id="MobiDB-lite"/>
    </source>
</evidence>
<evidence type="ECO:0000269" key="4">
    <source>
    </source>
</evidence>
<evidence type="ECO:0000305" key="5"/>
<sequence length="431" mass="48818">MAAFFLGESEMREHSSDLFMMTLNPFREQTTTTNAHDDHFYNLCFGSQQYRPRDEVGHIEQGNSSISTFSNGGVFRALAPIYLKAAQELLNEIVNVGNGSHGAKQERPVSKESTIYGVEDINGGYKPGVAALQMKKAKLISMGEMVEQRYKQYHDQMQTIISSFEQAAGLGSANSYTHMALQTISKQFRAVKDMISLQIKQINKLLGQKEFDEQLKKLGKMAHHHSNAWRPQRGLPEKAVSVLRSWLFEHFLHPYPRDLDKVMLAKQTGLTKSQVSNWFINARVRMWKPLVEELYSEEMDIEESRKGSDRYSTKGSSSKQPYNNTTSNESSNTILPAFRQGFTETETPRQNSSSSCSVVMRFTKQHMNQANFINFNGGFENYHTMDGNSVSLSLGLPHSCDQTFNNIHFESTSHGTENSAIYSSSTYQIMD</sequence>
<proteinExistence type="evidence at protein level"/>
<comment type="subunit">
    <text evidence="1 4">May form heterodimeric complexes with TALE/KNOX proteins (By similarity). Interacts with OFP1.</text>
</comment>
<comment type="interaction">
    <interactant intactId="EBI-1153992">
        <id>Q8S897</id>
    </interactant>
    <interactant intactId="EBI-1153809">
        <id>P46640</id>
        <label>KNAT2</label>
    </interactant>
    <organismsDiffer>false</organismsDiffer>
    <experiments>3</experiments>
</comment>
<comment type="interaction">
    <interactant intactId="EBI-1153992">
        <id>Q8S897</id>
    </interactant>
    <interactant intactId="EBI-1153908">
        <id>P48000</id>
        <label>KNAT3</label>
    </interactant>
    <organismsDiffer>false</organismsDiffer>
    <experiments>3</experiments>
</comment>
<comment type="interaction">
    <interactant intactId="EBI-1153992">
        <id>Q8S897</id>
    </interactant>
    <interactant intactId="EBI-530499">
        <id>Q84JS6</id>
        <label>KNAT6</label>
    </interactant>
    <organismsDiffer>false</organismsDiffer>
    <experiments>3</experiments>
</comment>
<comment type="subcellular location">
    <subcellularLocation>
        <location evidence="5">Nucleus</location>
    </subcellularLocation>
</comment>
<comment type="alternative products">
    <event type="alternative splicing"/>
    <isoform>
        <id>Q8S897-1</id>
        <name>1</name>
        <sequence type="displayed"/>
    </isoform>
    <text>A number of isoforms are produced. According to EST sequences.</text>
</comment>
<comment type="domain">
    <text>The SR/KY and BELL domains are responsive for the interaction between the TALE/BELL proteins and the TALE/KNOX proteins.</text>
</comment>
<comment type="similarity">
    <text evidence="5">Belongs to the TALE/BELL homeobox family.</text>
</comment>
<name>BLH5_ARATH</name>
<keyword id="KW-0025">Alternative splicing</keyword>
<keyword id="KW-0238">DNA-binding</keyword>
<keyword id="KW-0371">Homeobox</keyword>
<keyword id="KW-0539">Nucleus</keyword>
<keyword id="KW-1185">Reference proteome</keyword>
<keyword id="KW-0804">Transcription</keyword>
<keyword id="KW-0805">Transcription regulation</keyword>
<organism>
    <name type="scientific">Arabidopsis thaliana</name>
    <name type="common">Mouse-ear cress</name>
    <dbReference type="NCBI Taxonomy" id="3702"/>
    <lineage>
        <taxon>Eukaryota</taxon>
        <taxon>Viridiplantae</taxon>
        <taxon>Streptophyta</taxon>
        <taxon>Embryophyta</taxon>
        <taxon>Tracheophyta</taxon>
        <taxon>Spermatophyta</taxon>
        <taxon>Magnoliopsida</taxon>
        <taxon>eudicotyledons</taxon>
        <taxon>Gunneridae</taxon>
        <taxon>Pentapetalae</taxon>
        <taxon>rosids</taxon>
        <taxon>malvids</taxon>
        <taxon>Brassicales</taxon>
        <taxon>Brassicaceae</taxon>
        <taxon>Camelineae</taxon>
        <taxon>Arabidopsis</taxon>
    </lineage>
</organism>
<accession>Q8S897</accession>
<accession>C0SV62</accession>
<accession>Q4PSU3</accession>
<dbReference type="EMBL" id="AC007290">
    <property type="protein sequence ID" value="AAM15481.1"/>
    <property type="molecule type" value="Genomic_DNA"/>
</dbReference>
<dbReference type="EMBL" id="CP002685">
    <property type="protein sequence ID" value="AEC07955.1"/>
    <property type="molecule type" value="Genomic_DNA"/>
</dbReference>
<dbReference type="EMBL" id="CP002685">
    <property type="protein sequence ID" value="ANM62400.1"/>
    <property type="molecule type" value="Genomic_DNA"/>
</dbReference>
<dbReference type="EMBL" id="DQ056543">
    <property type="protein sequence ID" value="AAY78695.1"/>
    <property type="molecule type" value="mRNA"/>
</dbReference>
<dbReference type="EMBL" id="AB493565">
    <property type="protein sequence ID" value="BAH30403.1"/>
    <property type="molecule type" value="mRNA"/>
</dbReference>
<dbReference type="RefSeq" id="NP_001318297.1">
    <molecule id="Q8S897-1"/>
    <property type="nucleotide sequence ID" value="NM_001336110.1"/>
</dbReference>
<dbReference type="RefSeq" id="NP_180290.2">
    <molecule id="Q8S897-1"/>
    <property type="nucleotide sequence ID" value="NM_128280.3"/>
</dbReference>
<dbReference type="SMR" id="Q8S897"/>
<dbReference type="BioGRID" id="2616">
    <property type="interactions" value="10"/>
</dbReference>
<dbReference type="FunCoup" id="Q8S897">
    <property type="interactions" value="158"/>
</dbReference>
<dbReference type="IntAct" id="Q8S897">
    <property type="interactions" value="7"/>
</dbReference>
<dbReference type="STRING" id="3702.Q8S897"/>
<dbReference type="iPTMnet" id="Q8S897"/>
<dbReference type="PaxDb" id="3702-AT2G27220.2"/>
<dbReference type="EnsemblPlants" id="AT2G27220.1">
    <molecule id="Q8S897-1"/>
    <property type="protein sequence ID" value="AT2G27220.1"/>
    <property type="gene ID" value="AT2G27220"/>
</dbReference>
<dbReference type="EnsemblPlants" id="AT2G27220.3">
    <molecule id="Q8S897-1"/>
    <property type="protein sequence ID" value="AT2G27220.3"/>
    <property type="gene ID" value="AT2G27220"/>
</dbReference>
<dbReference type="GeneID" id="817264"/>
<dbReference type="Gramene" id="AT2G27220.1">
    <molecule id="Q8S897-1"/>
    <property type="protein sequence ID" value="AT2G27220.1"/>
    <property type="gene ID" value="AT2G27220"/>
</dbReference>
<dbReference type="Gramene" id="AT2G27220.3">
    <molecule id="Q8S897-1"/>
    <property type="protein sequence ID" value="AT2G27220.3"/>
    <property type="gene ID" value="AT2G27220"/>
</dbReference>
<dbReference type="KEGG" id="ath:AT2G27220"/>
<dbReference type="Araport" id="AT2G27220"/>
<dbReference type="TAIR" id="AT2G27220">
    <property type="gene designation" value="BLH5"/>
</dbReference>
<dbReference type="eggNOG" id="KOG0773">
    <property type="taxonomic scope" value="Eukaryota"/>
</dbReference>
<dbReference type="HOGENOM" id="CLU_011058_5_2_1"/>
<dbReference type="InParanoid" id="Q8S897"/>
<dbReference type="PRO" id="PR:Q8S897"/>
<dbReference type="Proteomes" id="UP000006548">
    <property type="component" value="Chromosome 2"/>
</dbReference>
<dbReference type="ExpressionAtlas" id="Q8S897">
    <property type="expression patterns" value="baseline and differential"/>
</dbReference>
<dbReference type="GO" id="GO:0005634">
    <property type="term" value="C:nucleus"/>
    <property type="evidence" value="ECO:0007669"/>
    <property type="project" value="UniProtKB-SubCell"/>
</dbReference>
<dbReference type="GO" id="GO:0003677">
    <property type="term" value="F:DNA binding"/>
    <property type="evidence" value="ECO:0007669"/>
    <property type="project" value="UniProtKB-KW"/>
</dbReference>
<dbReference type="GO" id="GO:0000981">
    <property type="term" value="F:DNA-binding transcription factor activity, RNA polymerase II-specific"/>
    <property type="evidence" value="ECO:0007669"/>
    <property type="project" value="InterPro"/>
</dbReference>
<dbReference type="CDD" id="cd00086">
    <property type="entry name" value="homeodomain"/>
    <property type="match status" value="1"/>
</dbReference>
<dbReference type="FunFam" id="1.10.10.60:FF:000117">
    <property type="entry name" value="BEL1-like homeodomain protein 9"/>
    <property type="match status" value="1"/>
</dbReference>
<dbReference type="Gene3D" id="1.10.10.60">
    <property type="entry name" value="Homeodomain-like"/>
    <property type="match status" value="1"/>
</dbReference>
<dbReference type="InterPro" id="IPR001356">
    <property type="entry name" value="HD"/>
</dbReference>
<dbReference type="InterPro" id="IPR017970">
    <property type="entry name" value="Homeobox_CS"/>
</dbReference>
<dbReference type="InterPro" id="IPR009057">
    <property type="entry name" value="Homeodomain-like_sf"/>
</dbReference>
<dbReference type="InterPro" id="IPR008422">
    <property type="entry name" value="KN_HD"/>
</dbReference>
<dbReference type="InterPro" id="IPR006563">
    <property type="entry name" value="POX_dom"/>
</dbReference>
<dbReference type="InterPro" id="IPR050224">
    <property type="entry name" value="TALE_homeobox"/>
</dbReference>
<dbReference type="PANTHER" id="PTHR11850">
    <property type="entry name" value="HOMEOBOX PROTEIN TRANSCRIPTION FACTORS"/>
    <property type="match status" value="1"/>
</dbReference>
<dbReference type="Pfam" id="PF05920">
    <property type="entry name" value="Homeobox_KN"/>
    <property type="match status" value="1"/>
</dbReference>
<dbReference type="Pfam" id="PF07526">
    <property type="entry name" value="POX"/>
    <property type="match status" value="1"/>
</dbReference>
<dbReference type="SMART" id="SM00389">
    <property type="entry name" value="HOX"/>
    <property type="match status" value="1"/>
</dbReference>
<dbReference type="SMART" id="SM00574">
    <property type="entry name" value="POX"/>
    <property type="match status" value="1"/>
</dbReference>
<dbReference type="SUPFAM" id="SSF46689">
    <property type="entry name" value="Homeodomain-like"/>
    <property type="match status" value="1"/>
</dbReference>
<dbReference type="PROSITE" id="PS00027">
    <property type="entry name" value="HOMEOBOX_1"/>
    <property type="match status" value="1"/>
</dbReference>
<dbReference type="PROSITE" id="PS50071">
    <property type="entry name" value="HOMEOBOX_2"/>
    <property type="match status" value="1"/>
</dbReference>
<protein>
    <recommendedName>
        <fullName>BEL1-like homeodomain protein 5</fullName>
        <shortName>BEL1-like protein 5</shortName>
    </recommendedName>
</protein>